<feature type="chain" id="PRO_0000213395" description="UDP-sugar transporter sqv-7">
    <location>
        <begin position="1"/>
        <end position="329"/>
    </location>
</feature>
<feature type="transmembrane region" description="Helical" evidence="1">
    <location>
        <begin position="15"/>
        <end position="34"/>
    </location>
</feature>
<feature type="transmembrane region" description="Helical" evidence="1">
    <location>
        <begin position="41"/>
        <end position="63"/>
    </location>
</feature>
<feature type="transmembrane region" description="Helical" evidence="1">
    <location>
        <begin position="86"/>
        <end position="108"/>
    </location>
</feature>
<feature type="transmembrane region" description="Helical" evidence="1">
    <location>
        <begin position="129"/>
        <end position="151"/>
    </location>
</feature>
<feature type="transmembrane region" description="Helical" evidence="1">
    <location>
        <begin position="155"/>
        <end position="174"/>
    </location>
</feature>
<feature type="transmembrane region" description="Helical" evidence="1">
    <location>
        <begin position="187"/>
        <end position="209"/>
    </location>
</feature>
<feature type="transmembrane region" description="Helical" evidence="1">
    <location>
        <begin position="224"/>
        <end position="246"/>
    </location>
</feature>
<feature type="transmembrane region" description="Helical" evidence="1">
    <location>
        <begin position="253"/>
        <end position="275"/>
    </location>
</feature>
<feature type="transmembrane region" description="Helical" evidence="1">
    <location>
        <begin position="280"/>
        <end position="302"/>
    </location>
</feature>
<feature type="mutagenesis site" description="In n2839; 50 percent reduction in brood size. Partial collapse of vulva invagination. Reduced levels of chondroitin and heparan sulfate proteoglycans associated with a reduction in the chondroitin chain length." evidence="2 5">
    <original>G</original>
    <variation>D</variation>
    <location>
        <position position="95"/>
    </location>
</feature>
<feature type="mutagenesis site" description="In n2844; F1 adults accumulate eggs in the uterus. Embryos are predominantly arrested at the bean/comma embryonic stage." evidence="5">
    <original>L</original>
    <variation>P</variation>
    <location>
        <position position="151"/>
    </location>
</feature>
<evidence type="ECO:0000255" key="1"/>
<evidence type="ECO:0000269" key="2">
    <source>
    </source>
</evidence>
<evidence type="ECO:0000269" key="3">
    <source>
    </source>
</evidence>
<evidence type="ECO:0000269" key="4">
    <source>
    </source>
</evidence>
<evidence type="ECO:0000269" key="5">
    <source>
    </source>
</evidence>
<evidence type="ECO:0000305" key="6"/>
<reference key="1">
    <citation type="journal article" date="1998" name="Science">
        <title>Genome sequence of the nematode C. elegans: a platform for investigating biology.</title>
        <authorList>
            <consortium name="The C. elegans sequencing consortium"/>
        </authorList>
    </citation>
    <scope>NUCLEOTIDE SEQUENCE [LARGE SCALE GENOMIC DNA]</scope>
    <source>
        <strain>Bristol N2</strain>
    </source>
</reference>
<reference key="2">
    <citation type="journal article" date="1999" name="Proc. Natl. Acad. Sci. U.S.A.">
        <title>sqv mutants of Caenorhabditis elegans are defective in vulval epithelial invagination.</title>
        <authorList>
            <person name="Herman T."/>
            <person name="Hartwieg E."/>
            <person name="Horvitz H.R."/>
        </authorList>
    </citation>
    <scope>FUNCTION</scope>
    <scope>MUTAGENESIS OF GLY-95 AND LEU-151</scope>
</reference>
<reference key="3">
    <citation type="journal article" date="2000" name="Proc. Natl. Acad. Sci. U.S.A.">
        <title>sqv-3, -7, and -8, a set of genes affecting morphogenesis in Caenorhabditis elegans, encode enzymes required for glycosaminoglycan biosynthesis.</title>
        <authorList>
            <person name="Bulik D.A."/>
            <person name="Wei G."/>
            <person name="Toyoda H."/>
            <person name="Kinoshita-Toyoda A."/>
            <person name="Waldrip W.R."/>
            <person name="Esko J.D."/>
            <person name="Robbins P.W."/>
            <person name="Selleck S.B."/>
        </authorList>
    </citation>
    <scope>FUNCTION</scope>
    <scope>MUTAGENESIS OF GLY-95</scope>
</reference>
<reference key="4">
    <citation type="journal article" date="2001" name="Proc. Natl. Acad. Sci. U.S.A.">
        <title>SQV-7, a protein involved in Caenorhabditis elegans epithelial invagination and early embryogenesis, transports UDP-glucuronic acid, UDP-N-acetylgalactosamine, and UDP-galactose.</title>
        <authorList>
            <person name="Berninsone P."/>
            <person name="Hwang H.Y."/>
            <person name="Zemtseva I."/>
            <person name="Horvitz H.R."/>
            <person name="Hirschberg C.B."/>
        </authorList>
    </citation>
    <scope>FUNCTION</scope>
</reference>
<reference key="5">
    <citation type="journal article" date="2007" name="J. Biol. Chem.">
        <title>Functional redundancy between two Caenorhabditis elegans nucleotide sugar transporters with a novel transport mechanism.</title>
        <authorList>
            <person name="Caffaro C.E."/>
            <person name="Hirschberg C.B."/>
            <person name="Berninsone P.M."/>
        </authorList>
    </citation>
    <scope>FUNCTION</scope>
</reference>
<reference key="6">
    <citation type="journal article" date="2013" name="Science">
        <title>An epidermal microRNA regulates neuronal migration through control of the cellular glycosylation state.</title>
        <authorList>
            <person name="Pedersen M.E."/>
            <person name="Snieckute G."/>
            <person name="Kagias K."/>
            <person name="Nehammer C."/>
            <person name="Multhaupt H.A."/>
            <person name="Couchman J.R."/>
            <person name="Pocock R."/>
        </authorList>
    </citation>
    <scope>FUNCTION</scope>
</reference>
<organism>
    <name type="scientific">Caenorhabditis elegans</name>
    <dbReference type="NCBI Taxonomy" id="6239"/>
    <lineage>
        <taxon>Eukaryota</taxon>
        <taxon>Metazoa</taxon>
        <taxon>Ecdysozoa</taxon>
        <taxon>Nematoda</taxon>
        <taxon>Chromadorea</taxon>
        <taxon>Rhabditida</taxon>
        <taxon>Rhabditina</taxon>
        <taxon>Rhabditomorpha</taxon>
        <taxon>Rhabditoidea</taxon>
        <taxon>Rhabditidae</taxon>
        <taxon>Peloderinae</taxon>
        <taxon>Caenorhabditis</taxon>
    </lineage>
</organism>
<gene>
    <name type="primary">sqv-7</name>
    <name type="ORF">C52E12.3</name>
</gene>
<comment type="function">
    <text evidence="2 3 4 5">Acts as a transporter of UDP-glucuronic acid (UDP-GlcA), UDP-N-acetylgalactosamine (UDP-GalNAc) and UDP-galactose (UDP-Gal) from the cytoplasm into the Golgi lumen (PubMed:11259660, PubMed:17652078). Involved in the biosynthesis of glycoconjugates that play a pivotal role in development (PubMed:11259660). Involved in the synthesis of chondroitin sulfate and heparan sulfate proteoglycans (PubMed:11005858). Required for embryonic development (PubMed:9927677). Involved in vulva epithelium invagination and embryonic development (PubMed:11259660, PubMed:9927677). Involved in the directed migration of hermaphrodite-specific neurons (PubMed:24052309).</text>
</comment>
<comment type="subcellular location">
    <subcellularLocation>
        <location>Golgi apparatus membrane</location>
        <topology>Multi-pass membrane protein</topology>
    </subcellularLocation>
</comment>
<comment type="similarity">
    <text evidence="6">Belongs to the TPT transporter family. SLC35D subfamily.</text>
</comment>
<sequence>MTSTVQSPLYSRVFSAVFYGVISVLIVFVNKILLTNYKFPSFLFVGVGQMMATILILFFAKMFRIVQFPSLDSSIPRKIMPLPLLYFFNLISGLGGTQMINLPMFTVLRRFSILMTMILEFYILNVKASKAVKISVGLMIGGSFIAAIYDLSFDALGYTMIFINNICTAALGVYTKQKLDAKDLGKYGLMFYNCLFMLLPALCVVQYTGDLDRAYSFMLSDSMTSSVWTCFLLSCICGFVLNYSLVLCTHHNSALTTTCVGPIKNLFVTYVGMFSSGDYVFQWANFTGINVSVFGSILYTYVTFRSKSTTISYKPLPMTMPIDVHKPRN</sequence>
<protein>
    <recommendedName>
        <fullName>UDP-sugar transporter sqv-7</fullName>
    </recommendedName>
    <alternativeName>
        <fullName>Squashed vulva protein 7</fullName>
    </alternativeName>
</protein>
<keyword id="KW-0333">Golgi apparatus</keyword>
<keyword id="KW-0472">Membrane</keyword>
<keyword id="KW-1185">Reference proteome</keyword>
<keyword id="KW-0762">Sugar transport</keyword>
<keyword id="KW-0812">Transmembrane</keyword>
<keyword id="KW-1133">Transmembrane helix</keyword>
<keyword id="KW-0813">Transport</keyword>
<name>SQV7_CAEEL</name>
<accession>Q18779</accession>
<dbReference type="EMBL" id="FO080554">
    <property type="protein sequence ID" value="CCD64624.1"/>
    <property type="molecule type" value="Genomic_DNA"/>
</dbReference>
<dbReference type="PIR" id="T15823">
    <property type="entry name" value="T15823"/>
</dbReference>
<dbReference type="RefSeq" id="NP_495436.1">
    <property type="nucleotide sequence ID" value="NM_063035.6"/>
</dbReference>
<dbReference type="SMR" id="Q18779"/>
<dbReference type="FunCoup" id="Q18779">
    <property type="interactions" value="1139"/>
</dbReference>
<dbReference type="STRING" id="6239.C52E12.3.1"/>
<dbReference type="TCDB" id="2.A.7.15.2">
    <property type="family name" value="the drug/metabolite transporter (dmt) superfamily"/>
</dbReference>
<dbReference type="PaxDb" id="6239-C52E12.3.1"/>
<dbReference type="EnsemblMetazoa" id="C52E12.3.1">
    <property type="protein sequence ID" value="C52E12.3.1"/>
    <property type="gene ID" value="WBGene00005025"/>
</dbReference>
<dbReference type="EnsemblMetazoa" id="C52E12.3.2">
    <property type="protein sequence ID" value="C52E12.3.2"/>
    <property type="gene ID" value="WBGene00005025"/>
</dbReference>
<dbReference type="GeneID" id="174145"/>
<dbReference type="KEGG" id="cel:CELE_C52E12.3"/>
<dbReference type="UCSC" id="C52E12.3">
    <property type="organism name" value="c. elegans"/>
</dbReference>
<dbReference type="AGR" id="WB:WBGene00005025"/>
<dbReference type="CTD" id="174145"/>
<dbReference type="WormBase" id="C52E12.3">
    <property type="protein sequence ID" value="CE04263"/>
    <property type="gene ID" value="WBGene00005025"/>
    <property type="gene designation" value="sqv-7"/>
</dbReference>
<dbReference type="eggNOG" id="KOG1444">
    <property type="taxonomic scope" value="Eukaryota"/>
</dbReference>
<dbReference type="GeneTree" id="ENSGT00940000167969"/>
<dbReference type="HOGENOM" id="CLU_040726_1_0_1"/>
<dbReference type="InParanoid" id="Q18779"/>
<dbReference type="OMA" id="VWMLINC"/>
<dbReference type="OrthoDB" id="417037at2759"/>
<dbReference type="PhylomeDB" id="Q18779"/>
<dbReference type="Reactome" id="R-CEL-173599">
    <property type="pathway name" value="Formation of the active cofactor, UDP-glucuronate"/>
</dbReference>
<dbReference type="Reactome" id="R-CEL-2022854">
    <property type="pathway name" value="Keratan sulfate biosynthesis"/>
</dbReference>
<dbReference type="Reactome" id="R-CEL-2022928">
    <property type="pathway name" value="HS-GAG biosynthesis"/>
</dbReference>
<dbReference type="Reactome" id="R-CEL-727802">
    <property type="pathway name" value="Transport of nucleotide sugars"/>
</dbReference>
<dbReference type="PRO" id="PR:Q18779"/>
<dbReference type="Proteomes" id="UP000001940">
    <property type="component" value="Chromosome II"/>
</dbReference>
<dbReference type="Bgee" id="WBGene00005025">
    <property type="expression patterns" value="Expressed in germ line (C elegans) and 4 other cell types or tissues"/>
</dbReference>
<dbReference type="GO" id="GO:0005737">
    <property type="term" value="C:cytoplasm"/>
    <property type="evidence" value="ECO:0000314"/>
    <property type="project" value="WormBase"/>
</dbReference>
<dbReference type="GO" id="GO:0005794">
    <property type="term" value="C:Golgi apparatus"/>
    <property type="evidence" value="ECO:0000318"/>
    <property type="project" value="GO_Central"/>
</dbReference>
<dbReference type="GO" id="GO:0000139">
    <property type="term" value="C:Golgi membrane"/>
    <property type="evidence" value="ECO:0007669"/>
    <property type="project" value="UniProtKB-SubCell"/>
</dbReference>
<dbReference type="GO" id="GO:0015297">
    <property type="term" value="F:antiporter activity"/>
    <property type="evidence" value="ECO:0000318"/>
    <property type="project" value="GO_Central"/>
</dbReference>
<dbReference type="GO" id="GO:0005459">
    <property type="term" value="F:UDP-galactose transmembrane transporter activity"/>
    <property type="evidence" value="ECO:0000314"/>
    <property type="project" value="WormBase"/>
</dbReference>
<dbReference type="GO" id="GO:0005461">
    <property type="term" value="F:UDP-glucuronate transmembrane transporter activity"/>
    <property type="evidence" value="ECO:0000314"/>
    <property type="project" value="WormBase"/>
</dbReference>
<dbReference type="GO" id="GO:0005463">
    <property type="term" value="F:UDP-N-acetylgalactosamine transmembrane transporter activity"/>
    <property type="evidence" value="ECO:0000314"/>
    <property type="project" value="WormBase"/>
</dbReference>
<dbReference type="GO" id="GO:0005462">
    <property type="term" value="F:UDP-N-acetylglucosamine transmembrane transporter activity"/>
    <property type="evidence" value="ECO:0000318"/>
    <property type="project" value="GO_Central"/>
</dbReference>
<dbReference type="GO" id="GO:0050650">
    <property type="term" value="P:chondroitin sulfate proteoglycan biosynthetic process"/>
    <property type="evidence" value="ECO:0000315"/>
    <property type="project" value="UniProtKB"/>
</dbReference>
<dbReference type="GO" id="GO:0018991">
    <property type="term" value="P:egg-laying behavior"/>
    <property type="evidence" value="ECO:0000315"/>
    <property type="project" value="WormBase"/>
</dbReference>
<dbReference type="GO" id="GO:0009792">
    <property type="term" value="P:embryo development ending in birth or egg hatching"/>
    <property type="evidence" value="ECO:0000315"/>
    <property type="project" value="WormBase"/>
</dbReference>
<dbReference type="GO" id="GO:0035262">
    <property type="term" value="P:gonad morphogenesis"/>
    <property type="evidence" value="ECO:0000315"/>
    <property type="project" value="UniProtKB"/>
</dbReference>
<dbReference type="GO" id="GO:0015012">
    <property type="term" value="P:heparan sulfate proteoglycan biosynthetic process"/>
    <property type="evidence" value="ECO:0000315"/>
    <property type="project" value="UniProtKB"/>
</dbReference>
<dbReference type="GO" id="GO:0002009">
    <property type="term" value="P:morphogenesis of an epithelium"/>
    <property type="evidence" value="ECO:0000315"/>
    <property type="project" value="WormBase"/>
</dbReference>
<dbReference type="GO" id="GO:0015780">
    <property type="term" value="P:nucleotide-sugar transmembrane transport"/>
    <property type="evidence" value="ECO:0000318"/>
    <property type="project" value="GO_Central"/>
</dbReference>
<dbReference type="GO" id="GO:1903354">
    <property type="term" value="P:regulation of distal tip cell migration"/>
    <property type="evidence" value="ECO:0000315"/>
    <property type="project" value="UniProtKB"/>
</dbReference>
<dbReference type="GO" id="GO:0022414">
    <property type="term" value="P:reproductive process"/>
    <property type="evidence" value="ECO:0000315"/>
    <property type="project" value="WormBase"/>
</dbReference>
<dbReference type="GO" id="GO:0072334">
    <property type="term" value="P:UDP-galactose transmembrane transport"/>
    <property type="evidence" value="ECO:0000314"/>
    <property type="project" value="WormBase"/>
</dbReference>
<dbReference type="GO" id="GO:0015787">
    <property type="term" value="P:UDP-glucuronate transmembrane transport"/>
    <property type="evidence" value="ECO:0000314"/>
    <property type="project" value="WormBase"/>
</dbReference>
<dbReference type="GO" id="GO:0015789">
    <property type="term" value="P:UDP-N-acetylgalactosamine transmembrane transport"/>
    <property type="evidence" value="ECO:0000314"/>
    <property type="project" value="WormBase"/>
</dbReference>
<dbReference type="GO" id="GO:0040025">
    <property type="term" value="P:vulval development"/>
    <property type="evidence" value="ECO:0000315"/>
    <property type="project" value="WormBase"/>
</dbReference>
<dbReference type="InterPro" id="IPR004853">
    <property type="entry name" value="Sugar_P_trans_dom"/>
</dbReference>
<dbReference type="InterPro" id="IPR050186">
    <property type="entry name" value="TPT_transporter"/>
</dbReference>
<dbReference type="PANTHER" id="PTHR11132">
    <property type="entry name" value="SOLUTE CARRIER FAMILY 35"/>
    <property type="match status" value="1"/>
</dbReference>
<dbReference type="Pfam" id="PF03151">
    <property type="entry name" value="TPT"/>
    <property type="match status" value="1"/>
</dbReference>
<proteinExistence type="evidence at protein level"/>